<evidence type="ECO:0000305" key="1"/>
<name>C14AA_BACTS</name>
<comment type="function">
    <text>Promotes colloidosmotic lysis by binding to the midgut epithelial cells of insects.</text>
</comment>
<comment type="developmental stage">
    <text>The crystal protein is produced during sporulation and is accumulated both as an inclusion and as part of the spore coat.</text>
</comment>
<comment type="miscellaneous">
    <text>Toxic segment of the protein is located in the N-terminus.</text>
</comment>
<comment type="similarity">
    <text evidence="1">Belongs to the delta endotoxin family.</text>
</comment>
<gene>
    <name type="primary">cry14Aa</name>
    <name type="synonym">cryXIVA(a)</name>
</gene>
<reference key="1">
    <citation type="patent" date="1994-07-21" number="WO9416079">
        <title>Novel Bacillus thuringiensis toxins active against corn rootworm larvae.</title>
        <authorList>
            <person name="Payne J.M."/>
            <person name="Narva K.E."/>
        </authorList>
    </citation>
    <scope>NUCLEOTIDE SEQUENCE [GENOMIC DNA]</scope>
    <source>
        <strain>NRRL B-18679 / PS80JJ1</strain>
    </source>
</reference>
<protein>
    <recommendedName>
        <fullName>Pesticidal crystal protein Cry14Aa</fullName>
    </recommendedName>
    <alternativeName>
        <fullName>132 kDa crystal protein</fullName>
    </alternativeName>
    <alternativeName>
        <fullName>Crystaline entomocidal protoxin</fullName>
    </alternativeName>
    <alternativeName>
        <fullName>Insecticidal delta-endotoxin CryXIVA(a)</fullName>
    </alternativeName>
</protein>
<organism>
    <name type="scientific">Bacillus thuringiensis subsp. sotto</name>
    <dbReference type="NCBI Taxonomy" id="29340"/>
    <lineage>
        <taxon>Bacteria</taxon>
        <taxon>Bacillati</taxon>
        <taxon>Bacillota</taxon>
        <taxon>Bacilli</taxon>
        <taxon>Bacillales</taxon>
        <taxon>Bacillaceae</taxon>
        <taxon>Bacillus</taxon>
        <taxon>Bacillus cereus group</taxon>
    </lineage>
</organism>
<keyword id="KW-0749">Sporulation</keyword>
<keyword id="KW-0800">Toxin</keyword>
<keyword id="KW-0843">Virulence</keyword>
<accession>Q45710</accession>
<proteinExistence type="evidence at transcript level"/>
<dbReference type="EMBL" id="U13955">
    <property type="protein sequence ID" value="AAA21516.1"/>
    <property type="molecule type" value="Genomic_DNA"/>
</dbReference>
<dbReference type="PIR" id="T18210">
    <property type="entry name" value="T18210"/>
</dbReference>
<dbReference type="SMR" id="Q45710"/>
<dbReference type="GO" id="GO:0005102">
    <property type="term" value="F:signaling receptor binding"/>
    <property type="evidence" value="ECO:0007669"/>
    <property type="project" value="InterPro"/>
</dbReference>
<dbReference type="GO" id="GO:0090729">
    <property type="term" value="F:toxin activity"/>
    <property type="evidence" value="ECO:0007669"/>
    <property type="project" value="UniProtKB-KW"/>
</dbReference>
<dbReference type="GO" id="GO:0030435">
    <property type="term" value="P:sporulation resulting in formation of a cellular spore"/>
    <property type="evidence" value="ECO:0007669"/>
    <property type="project" value="UniProtKB-KW"/>
</dbReference>
<dbReference type="CDD" id="cd04085">
    <property type="entry name" value="delta_endotoxin_C"/>
    <property type="match status" value="1"/>
</dbReference>
<dbReference type="Gene3D" id="2.100.10.40">
    <property type="match status" value="1"/>
</dbReference>
<dbReference type="Gene3D" id="2.60.120.260">
    <property type="entry name" value="Galactose-binding domain-like"/>
    <property type="match status" value="1"/>
</dbReference>
<dbReference type="Gene3D" id="1.20.190.10">
    <property type="entry name" value="Pesticidal crystal protein, N-terminal domain"/>
    <property type="match status" value="1"/>
</dbReference>
<dbReference type="InterPro" id="IPR041587">
    <property type="entry name" value="Cry_V"/>
</dbReference>
<dbReference type="InterPro" id="IPR008979">
    <property type="entry name" value="Galactose-bd-like_sf"/>
</dbReference>
<dbReference type="InterPro" id="IPR005638">
    <property type="entry name" value="Pest_crys_dom-III"/>
</dbReference>
<dbReference type="InterPro" id="IPR036716">
    <property type="entry name" value="Pest_crys_N_sf"/>
</dbReference>
<dbReference type="InterPro" id="IPR001178">
    <property type="entry name" value="Pest_cryst_dom_II"/>
</dbReference>
<dbReference type="Pfam" id="PF17997">
    <property type="entry name" value="Cry1Ac_D5"/>
    <property type="match status" value="1"/>
</dbReference>
<dbReference type="Pfam" id="PF03944">
    <property type="entry name" value="Endotoxin_C"/>
    <property type="match status" value="1"/>
</dbReference>
<dbReference type="Pfam" id="PF00555">
    <property type="entry name" value="Endotoxin_M"/>
    <property type="match status" value="1"/>
</dbReference>
<dbReference type="SUPFAM" id="SSF56849">
    <property type="entry name" value="delta-Endotoxin (insectocide), N-terminal domain"/>
    <property type="match status" value="1"/>
</dbReference>
<dbReference type="SUPFAM" id="SSF49785">
    <property type="entry name" value="Galactose-binding domain-like"/>
    <property type="match status" value="1"/>
</dbReference>
<feature type="chain" id="PRO_0000174087" description="Pesticidal crystal protein Cry14Aa">
    <location>
        <begin position="1"/>
        <end position="1186"/>
    </location>
</feature>
<sequence length="1186" mass="131695">MDCNLQSQQNIPYNVLAIPVSNVNALVDTAGDLKKAWEEFQKTGSFSLTALQQGFSASQGGAFNYLTLLQSGISLAGSFVPGGTFVAPIVNMVIGWLWPHKNKTADTENLIKLIDEEIQKQLNKALLDQDRNNWTSFLESIFDTSATVSNAIIDAQWSGTVDTTNRQQKTPTTSDYLNVVGKFDSADSSIITNENQIMNGNFDVAAAPYFVIGATLRLSLYQSYIKFCNSWIDAVGFSTNDANTQKANLARTKLTMRTTINEYTQRVMKVFKDSKNMPTIGTNKFSVDAYNVYVKGMTLNVLDMVAIWSSLYPNDYTSQTAIEQTRVTFSNMVGQEEGTDGTLKIYNTFDSLSYQHSLIPNNNVNLISYYTDELQNLELAVYTPKGGSGYAYPYGFILNYANSNYKYGDNDPTGKPLNKQDGPIQQINAATQNSKYLDGETINGIGASLPGYCTTGCSATEQPFSCTSTANSYKASCNPSDTNQKINALYAFTQTNVKGSTGKLGVLASLVPYDLNPKNVFGELDSDTNNVILKGIPAEKGYFPNNARPTVVKEWINGASAVPFYSGNTLFMTATNLTATQYKIRIRYANPNSDTQIGVLITQNGSQISNSNLTLYSTTDSSMSSNLPQNVYVTGENGNYTLLDLYSTTNVLSTGDITLKLTGGNQKIFIDRIEFIPTMPVPAPTNNTNNNNGDNGNNNPPHHGCAIAGTQQLCSGPPKFEQVSDLEKITTQVYMLFKSSSYEELALKVSSYQINQVALKVMALSDEKFCEEKRLLRKLVNKANQLLEARNLLVGGNFETTQNWVLGTNAYINYDSFLFNGNYLSLQPASGFFTSYAYQKIDESTLKPYTRYKVSGFIGQSNQVELIISRYGKEIDKILNVPYAGPLPITADASITCCAPEIDQCDGGQSDSHFFNYSIDVGALHPELNPGIEIGLKIVQSNGYITISNLEIIEERPLTEMEIQAVNRKDQKWKREKLLECASVSELLQPIINQIDSLFKDANWYNDILPHVTYQTLKNIIVPDLPKLKHWFIDHLPGEYHEIEQKMKEALKHAFTQLDEKNLIHNGHFATNLIDWQVEGDARMKVLENNALALQLSNWDSSVSQSIDILEFDEDKAYKLRVYAQGSGTIQFGNCEDEAIQFNTNSFVYKEKIIYFDTPSINLHIQSEGSEFVVSSIDLVELSDDE</sequence>